<protein>
    <recommendedName>
        <fullName>Regulatory protein zeste</fullName>
    </recommendedName>
</protein>
<comment type="function">
    <text evidence="1">Involved in transvection phenomena (= synapsis-dependent gene expression), where the synaptic pairing of chromosomes carrying genes with which zeste interacts influences the expression of these genes. Zeste binds to DNA and stimulates transcription from a nearby promoter (By similarity).</text>
</comment>
<comment type="subunit">
    <text evidence="1">Self-associates forming complexes of several hundred monomers.</text>
</comment>
<comment type="subcellular location">
    <subcellularLocation>
        <location evidence="1">Nucleus</location>
    </subcellularLocation>
</comment>
<reference key="1">
    <citation type="journal article" date="1993" name="Mol. Biol. Evol.">
        <title>Population genetics and phylogenetics of DNA sequence variation at multiple loci within the Drosophila melanogaster species complex.</title>
        <authorList>
            <person name="Hey J."/>
            <person name="Kliman R.M."/>
        </authorList>
    </citation>
    <scope>NUCLEOTIDE SEQUENCE [GENOMIC DNA]</scope>
    <source>
        <strain>CA1</strain>
        <strain>CA2</strain>
        <strain>K1</strain>
        <strain>K2</strain>
        <strain>LI1</strain>
        <strain>LI2</strain>
    </source>
</reference>
<gene>
    <name type="primary">z</name>
</gene>
<sequence length="268" mass="30353">TAEEKEVLYTLFHLHEEVIDIKHRKKQRNKYSVRETWDKIVKDFNSHPHVSAMRNIKQIQKFWLNSRLRKQYPYRDGSSSNLSSGSAKISSVSVSVASAVPQQQQQQHHQQHDNVKEEPEYQISPDASEHNPQADTFDEIEMDANDVSEIDEDPMEQQQQQQQEAQAQAQAQAQVQSAAAEMQKMQQVNAVAVAAAAAANATMINTHQINVDQISAEKLTLNDLLHFKTARPREEIILQIKHPSEATATQIHTIPTQAQQHPMATITA</sequence>
<organism>
    <name type="scientific">Drosophila simulans</name>
    <name type="common">Fruit fly</name>
    <dbReference type="NCBI Taxonomy" id="7240"/>
    <lineage>
        <taxon>Eukaryota</taxon>
        <taxon>Metazoa</taxon>
        <taxon>Ecdysozoa</taxon>
        <taxon>Arthropoda</taxon>
        <taxon>Hexapoda</taxon>
        <taxon>Insecta</taxon>
        <taxon>Pterygota</taxon>
        <taxon>Neoptera</taxon>
        <taxon>Endopterygota</taxon>
        <taxon>Diptera</taxon>
        <taxon>Brachycera</taxon>
        <taxon>Muscomorpha</taxon>
        <taxon>Ephydroidea</taxon>
        <taxon>Drosophilidae</taxon>
        <taxon>Drosophila</taxon>
        <taxon>Sophophora</taxon>
    </lineage>
</organism>
<dbReference type="EMBL" id="L13049">
    <property type="protein sequence ID" value="AAA29032.1"/>
    <property type="molecule type" value="Genomic_DNA"/>
</dbReference>
<dbReference type="EMBL" id="L13050">
    <property type="protein sequence ID" value="AAA29033.1"/>
    <property type="molecule type" value="Genomic_DNA"/>
</dbReference>
<dbReference type="EMBL" id="L13051">
    <property type="protein sequence ID" value="AAA29034.1"/>
    <property type="molecule type" value="Genomic_DNA"/>
</dbReference>
<dbReference type="EMBL" id="L13052">
    <property type="protein sequence ID" value="AAA29035.1"/>
    <property type="molecule type" value="Genomic_DNA"/>
</dbReference>
<dbReference type="EMBL" id="L13053">
    <property type="protein sequence ID" value="AAA29036.1"/>
    <property type="molecule type" value="Genomic_DNA"/>
</dbReference>
<dbReference type="EMBL" id="L13055">
    <property type="protein sequence ID" value="AAA29038.1"/>
    <property type="molecule type" value="Genomic_DNA"/>
</dbReference>
<dbReference type="SMR" id="P67856"/>
<dbReference type="EnsemblMetazoa" id="FBtr0216518">
    <property type="protein sequence ID" value="FBpp0215010"/>
    <property type="gene ID" value="FBgn0012904"/>
</dbReference>
<dbReference type="EnsemblMetazoa" id="XM_002105962.4">
    <property type="protein sequence ID" value="XP_002105998.3"/>
    <property type="gene ID" value="LOC6724962"/>
</dbReference>
<dbReference type="OrthoDB" id="7791603at2759"/>
<dbReference type="Bgee" id="FBgn0012904">
    <property type="expression patterns" value="Expressed in embryo and 3 other cell types or tissues"/>
</dbReference>
<dbReference type="GO" id="GO:0005634">
    <property type="term" value="C:nucleus"/>
    <property type="evidence" value="ECO:0007669"/>
    <property type="project" value="UniProtKB-SubCell"/>
</dbReference>
<dbReference type="GO" id="GO:0003677">
    <property type="term" value="F:DNA binding"/>
    <property type="evidence" value="ECO:0007669"/>
    <property type="project" value="UniProtKB-KW"/>
</dbReference>
<dbReference type="InterPro" id="IPR028002">
    <property type="entry name" value="Myb_DNA-bind_5"/>
</dbReference>
<dbReference type="Pfam" id="PF13873">
    <property type="entry name" value="Myb_DNA-bind_5"/>
    <property type="match status" value="1"/>
</dbReference>
<evidence type="ECO:0000250" key="1"/>
<evidence type="ECO:0000256" key="2">
    <source>
        <dbReference type="SAM" id="MobiDB-lite"/>
    </source>
</evidence>
<accession>P67856</accession>
<accession>Q24597</accession>
<accession>Q24598</accession>
<accession>Q24599</accession>
<accession>Q24600</accession>
<accession>Q24601</accession>
<accession>Q24602</accession>
<accession>Q24603</accession>
<accession>Q24604</accession>
<accession>Q27387</accession>
<keyword id="KW-0238">DNA-binding</keyword>
<keyword id="KW-0539">Nucleus</keyword>
<keyword id="KW-0804">Transcription</keyword>
<keyword id="KW-0805">Transcription regulation</keyword>
<name>ZEST_DROSI</name>
<proteinExistence type="inferred from homology"/>
<feature type="chain" id="PRO_0000066575" description="Regulatory protein zeste">
    <location>
        <begin position="1" status="less than"/>
        <end position="268" status="greater than"/>
    </location>
</feature>
<feature type="DNA-binding region" evidence="1">
    <location>
        <begin position="1" status="less than"/>
        <end position="72"/>
    </location>
</feature>
<feature type="region of interest" description="Disordered" evidence="2">
    <location>
        <begin position="94"/>
        <end position="133"/>
    </location>
</feature>
<feature type="compositionally biased region" description="Low complexity" evidence="2">
    <location>
        <begin position="94"/>
        <end position="108"/>
    </location>
</feature>
<feature type="compositionally biased region" description="Basic and acidic residues" evidence="2">
    <location>
        <begin position="110"/>
        <end position="119"/>
    </location>
</feature>
<feature type="sequence variant" description="In strain: K2.">
    <location>
        <begin position="105"/>
        <end position="106"/>
    </location>
</feature>
<feature type="non-terminal residue">
    <location>
        <position position="1"/>
    </location>
</feature>
<feature type="non-terminal residue">
    <location>
        <position position="268"/>
    </location>
</feature>